<reference key="1">
    <citation type="journal article" date="2002" name="Nature">
        <title>Complete genome sequence of the model actinomycete Streptomyces coelicolor A3(2).</title>
        <authorList>
            <person name="Bentley S.D."/>
            <person name="Chater K.F."/>
            <person name="Cerdeno-Tarraga A.-M."/>
            <person name="Challis G.L."/>
            <person name="Thomson N.R."/>
            <person name="James K.D."/>
            <person name="Harris D.E."/>
            <person name="Quail M.A."/>
            <person name="Kieser H."/>
            <person name="Harper D."/>
            <person name="Bateman A."/>
            <person name="Brown S."/>
            <person name="Chandra G."/>
            <person name="Chen C.W."/>
            <person name="Collins M."/>
            <person name="Cronin A."/>
            <person name="Fraser A."/>
            <person name="Goble A."/>
            <person name="Hidalgo J."/>
            <person name="Hornsby T."/>
            <person name="Howarth S."/>
            <person name="Huang C.-H."/>
            <person name="Kieser T."/>
            <person name="Larke L."/>
            <person name="Murphy L.D."/>
            <person name="Oliver K."/>
            <person name="O'Neil S."/>
            <person name="Rabbinowitsch E."/>
            <person name="Rajandream M.A."/>
            <person name="Rutherford K.M."/>
            <person name="Rutter S."/>
            <person name="Seeger K."/>
            <person name="Saunders D."/>
            <person name="Sharp S."/>
            <person name="Squares R."/>
            <person name="Squares S."/>
            <person name="Taylor K."/>
            <person name="Warren T."/>
            <person name="Wietzorrek A."/>
            <person name="Woodward J.R."/>
            <person name="Barrell B.G."/>
            <person name="Parkhill J."/>
            <person name="Hopwood D.A."/>
        </authorList>
    </citation>
    <scope>NUCLEOTIDE SEQUENCE [LARGE SCALE GENOMIC DNA]</scope>
    <source>
        <strain>ATCC BAA-471 / A3(2) / M145</strain>
    </source>
</reference>
<feature type="chain" id="PRO_0000067806" description="DNA-directed RNA polymerase subunit beta'">
    <location>
        <begin position="1"/>
        <end position="1299"/>
    </location>
</feature>
<feature type="region of interest" description="Disordered" evidence="2">
    <location>
        <begin position="385"/>
        <end position="405"/>
    </location>
</feature>
<feature type="binding site" evidence="1">
    <location>
        <position position="60"/>
    </location>
    <ligand>
        <name>Zn(2+)</name>
        <dbReference type="ChEBI" id="CHEBI:29105"/>
        <label>1</label>
    </ligand>
</feature>
<feature type="binding site" evidence="1">
    <location>
        <position position="62"/>
    </location>
    <ligand>
        <name>Zn(2+)</name>
        <dbReference type="ChEBI" id="CHEBI:29105"/>
        <label>1</label>
    </ligand>
</feature>
<feature type="binding site" evidence="1">
    <location>
        <position position="75"/>
    </location>
    <ligand>
        <name>Zn(2+)</name>
        <dbReference type="ChEBI" id="CHEBI:29105"/>
        <label>1</label>
    </ligand>
</feature>
<feature type="binding site" evidence="1">
    <location>
        <position position="78"/>
    </location>
    <ligand>
        <name>Zn(2+)</name>
        <dbReference type="ChEBI" id="CHEBI:29105"/>
        <label>1</label>
    </ligand>
</feature>
<feature type="binding site" evidence="1">
    <location>
        <position position="535"/>
    </location>
    <ligand>
        <name>Mg(2+)</name>
        <dbReference type="ChEBI" id="CHEBI:18420"/>
    </ligand>
</feature>
<feature type="binding site" evidence="1">
    <location>
        <position position="537"/>
    </location>
    <ligand>
        <name>Mg(2+)</name>
        <dbReference type="ChEBI" id="CHEBI:18420"/>
    </ligand>
</feature>
<feature type="binding site" evidence="1">
    <location>
        <position position="539"/>
    </location>
    <ligand>
        <name>Mg(2+)</name>
        <dbReference type="ChEBI" id="CHEBI:18420"/>
    </ligand>
</feature>
<feature type="binding site" evidence="1">
    <location>
        <position position="886"/>
    </location>
    <ligand>
        <name>Zn(2+)</name>
        <dbReference type="ChEBI" id="CHEBI:29105"/>
        <label>2</label>
    </ligand>
</feature>
<feature type="binding site" evidence="1">
    <location>
        <position position="962"/>
    </location>
    <ligand>
        <name>Zn(2+)</name>
        <dbReference type="ChEBI" id="CHEBI:29105"/>
        <label>2</label>
    </ligand>
</feature>
<feature type="binding site" evidence="1">
    <location>
        <position position="969"/>
    </location>
    <ligand>
        <name>Zn(2+)</name>
        <dbReference type="ChEBI" id="CHEBI:29105"/>
        <label>2</label>
    </ligand>
</feature>
<feature type="binding site" evidence="1">
    <location>
        <position position="972"/>
    </location>
    <ligand>
        <name>Zn(2+)</name>
        <dbReference type="ChEBI" id="CHEBI:29105"/>
        <label>2</label>
    </ligand>
</feature>
<feature type="strand" evidence="4">
    <location>
        <begin position="9"/>
        <end position="11"/>
    </location>
</feature>
<feature type="helix" evidence="4">
    <location>
        <begin position="17"/>
        <end position="23"/>
    </location>
</feature>
<feature type="strand" evidence="4">
    <location>
        <begin position="24"/>
        <end position="27"/>
    </location>
</feature>
<feature type="turn" evidence="4">
    <location>
        <begin position="36"/>
        <end position="38"/>
    </location>
</feature>
<feature type="strand" evidence="5">
    <location>
        <begin position="43"/>
        <end position="45"/>
    </location>
</feature>
<feature type="helix" evidence="4">
    <location>
        <begin position="49"/>
        <end position="52"/>
    </location>
</feature>
<feature type="strand" evidence="4">
    <location>
        <begin position="55"/>
        <end position="58"/>
    </location>
</feature>
<feature type="strand" evidence="4">
    <location>
        <begin position="61"/>
        <end position="63"/>
    </location>
</feature>
<feature type="strand" evidence="5">
    <location>
        <begin position="67"/>
        <end position="70"/>
    </location>
</feature>
<feature type="turn" evidence="4">
    <location>
        <begin position="76"/>
        <end position="78"/>
    </location>
</feature>
<feature type="helix" evidence="4">
    <location>
        <begin position="85"/>
        <end position="89"/>
    </location>
</feature>
<feature type="strand" evidence="4">
    <location>
        <begin position="92"/>
        <end position="102"/>
    </location>
</feature>
<feature type="turn" evidence="4">
    <location>
        <begin position="104"/>
        <end position="106"/>
    </location>
</feature>
<feature type="strand" evidence="4">
    <location>
        <begin position="107"/>
        <end position="109"/>
    </location>
</feature>
<feature type="helix" evidence="4">
    <location>
        <begin position="111"/>
        <end position="114"/>
    </location>
</feature>
<feature type="strand" evidence="4">
    <location>
        <begin position="117"/>
        <end position="119"/>
    </location>
</feature>
<feature type="helix" evidence="4">
    <location>
        <begin position="122"/>
        <end position="129"/>
    </location>
</feature>
<feature type="strand" evidence="4">
    <location>
        <begin position="132"/>
        <end position="139"/>
    </location>
</feature>
<feature type="helix" evidence="4">
    <location>
        <begin position="141"/>
        <end position="146"/>
    </location>
</feature>
<feature type="helix" evidence="4">
    <location>
        <begin position="148"/>
        <end position="187"/>
    </location>
</feature>
<feature type="strand" evidence="4">
    <location>
        <begin position="190"/>
        <end position="192"/>
    </location>
</feature>
<feature type="helix" evidence="4">
    <location>
        <begin position="193"/>
        <end position="227"/>
    </location>
</feature>
<feature type="strand" evidence="4">
    <location>
        <begin position="234"/>
        <end position="236"/>
    </location>
</feature>
<feature type="helix" evidence="4">
    <location>
        <begin position="238"/>
        <end position="247"/>
    </location>
</feature>
<feature type="strand" evidence="4">
    <location>
        <begin position="250"/>
        <end position="255"/>
    </location>
</feature>
<feature type="helix" evidence="4">
    <location>
        <begin position="258"/>
        <end position="266"/>
    </location>
</feature>
<feature type="helix" evidence="4">
    <location>
        <begin position="270"/>
        <end position="282"/>
    </location>
</feature>
<feature type="helix" evidence="4">
    <location>
        <begin position="286"/>
        <end position="303"/>
    </location>
</feature>
<feature type="strand" evidence="4">
    <location>
        <begin position="304"/>
        <end position="306"/>
    </location>
</feature>
<feature type="helix" evidence="4">
    <location>
        <begin position="309"/>
        <end position="311"/>
    </location>
</feature>
<feature type="strand" evidence="4">
    <location>
        <begin position="312"/>
        <end position="318"/>
    </location>
</feature>
<feature type="helix" evidence="4">
    <location>
        <begin position="322"/>
        <end position="324"/>
    </location>
</feature>
<feature type="strand" evidence="4">
    <location>
        <begin position="327"/>
        <end position="330"/>
    </location>
</feature>
<feature type="turn" evidence="4">
    <location>
        <begin position="331"/>
        <end position="333"/>
    </location>
</feature>
<feature type="strand" evidence="4">
    <location>
        <begin position="334"/>
        <end position="337"/>
    </location>
</feature>
<feature type="helix" evidence="4">
    <location>
        <begin position="339"/>
        <end position="359"/>
    </location>
</feature>
<feature type="helix" evidence="4">
    <location>
        <begin position="364"/>
        <end position="382"/>
    </location>
</feature>
<feature type="strand" evidence="4">
    <location>
        <begin position="386"/>
        <end position="389"/>
    </location>
</feature>
<feature type="strand" evidence="4">
    <location>
        <begin position="393"/>
        <end position="397"/>
    </location>
</feature>
<feature type="helix" evidence="4">
    <location>
        <begin position="403"/>
        <end position="405"/>
    </location>
</feature>
<feature type="strand" evidence="4">
    <location>
        <begin position="406"/>
        <end position="408"/>
    </location>
</feature>
<feature type="helix" evidence="4">
    <location>
        <begin position="412"/>
        <end position="415"/>
    </location>
</feature>
<feature type="strand" evidence="4">
    <location>
        <begin position="418"/>
        <end position="421"/>
    </location>
</feature>
<feature type="strand" evidence="4">
    <location>
        <begin position="423"/>
        <end position="432"/>
    </location>
</feature>
<feature type="strand" evidence="4">
    <location>
        <begin position="440"/>
        <end position="444"/>
    </location>
</feature>
<feature type="helix" evidence="4">
    <location>
        <begin position="445"/>
        <end position="451"/>
    </location>
</feature>
<feature type="helix" evidence="4">
    <location>
        <begin position="453"/>
        <end position="462"/>
    </location>
</feature>
<feature type="strand" evidence="4">
    <location>
        <begin position="465"/>
        <end position="468"/>
    </location>
</feature>
<feature type="helix" evidence="4">
    <location>
        <begin position="469"/>
        <end position="478"/>
    </location>
</feature>
<feature type="helix" evidence="4">
    <location>
        <begin position="481"/>
        <end position="490"/>
    </location>
</feature>
<feature type="strand" evidence="4">
    <location>
        <begin position="496"/>
        <end position="499"/>
    </location>
</feature>
<feature type="helix" evidence="4">
    <location>
        <begin position="506"/>
        <end position="508"/>
    </location>
</feature>
<feature type="strand" evidence="4">
    <location>
        <begin position="509"/>
        <end position="524"/>
    </location>
</feature>
<feature type="helix" evidence="4">
    <location>
        <begin position="526"/>
        <end position="531"/>
    </location>
</feature>
<feature type="strand" evidence="4">
    <location>
        <begin position="536"/>
        <end position="538"/>
    </location>
</feature>
<feature type="strand" evidence="4">
    <location>
        <begin position="540"/>
        <end position="544"/>
    </location>
</feature>
<feature type="helix" evidence="4">
    <location>
        <begin position="549"/>
        <end position="557"/>
    </location>
</feature>
<feature type="helix" evidence="4">
    <location>
        <begin position="561"/>
        <end position="563"/>
    </location>
</feature>
<feature type="turn" evidence="4">
    <location>
        <begin position="568"/>
        <end position="570"/>
    </location>
</feature>
<feature type="helix" evidence="4">
    <location>
        <begin position="581"/>
        <end position="589"/>
    </location>
</feature>
<feature type="strand" evidence="4">
    <location>
        <begin position="593"/>
        <end position="595"/>
    </location>
</feature>
<feature type="strand" evidence="4">
    <location>
        <begin position="603"/>
        <end position="606"/>
    </location>
</feature>
<feature type="helix" evidence="4">
    <location>
        <begin position="607"/>
        <end position="616"/>
    </location>
</feature>
<feature type="strand" evidence="3">
    <location>
        <begin position="617"/>
        <end position="619"/>
    </location>
</feature>
<feature type="strand" evidence="4">
    <location>
        <begin position="625"/>
        <end position="629"/>
    </location>
</feature>
<feature type="helix" evidence="4">
    <location>
        <begin position="637"/>
        <end position="639"/>
    </location>
</feature>
<feature type="strand" evidence="4">
    <location>
        <begin position="657"/>
        <end position="661"/>
    </location>
</feature>
<feature type="helix" evidence="4">
    <location>
        <begin position="663"/>
        <end position="671"/>
    </location>
</feature>
<feature type="helix" evidence="4">
    <location>
        <begin position="686"/>
        <end position="698"/>
    </location>
</feature>
<feature type="helix" evidence="4">
    <location>
        <begin position="701"/>
        <end position="720"/>
    </location>
</feature>
<feature type="turn" evidence="4">
    <location>
        <begin position="728"/>
        <end position="730"/>
    </location>
</feature>
<feature type="helix" evidence="4">
    <location>
        <begin position="736"/>
        <end position="755"/>
    </location>
</feature>
<feature type="turn" evidence="4">
    <location>
        <begin position="756"/>
        <end position="758"/>
    </location>
</feature>
<feature type="helix" evidence="4">
    <location>
        <begin position="762"/>
        <end position="787"/>
    </location>
</feature>
<feature type="strand" evidence="4">
    <location>
        <begin position="790"/>
        <end position="792"/>
    </location>
</feature>
<feature type="helix" evidence="4">
    <location>
        <begin position="793"/>
        <end position="798"/>
    </location>
</feature>
<feature type="strand" evidence="4">
    <location>
        <begin position="801"/>
        <end position="803"/>
    </location>
</feature>
<feature type="helix" evidence="4">
    <location>
        <begin position="806"/>
        <end position="813"/>
    </location>
</feature>
<feature type="turn" evidence="5">
    <location>
        <begin position="822"/>
        <end position="824"/>
    </location>
</feature>
<feature type="turn" evidence="4">
    <location>
        <begin position="835"/>
        <end position="837"/>
    </location>
</feature>
<feature type="helix" evidence="4">
    <location>
        <begin position="841"/>
        <end position="876"/>
    </location>
</feature>
<feature type="strand" evidence="4">
    <location>
        <begin position="880"/>
        <end position="884"/>
    </location>
</feature>
<feature type="strand" evidence="4">
    <location>
        <begin position="892"/>
        <end position="895"/>
    </location>
</feature>
<feature type="turn" evidence="4">
    <location>
        <begin position="909"/>
        <end position="917"/>
    </location>
</feature>
<feature type="strand" evidence="4">
    <location>
        <begin position="919"/>
        <end position="922"/>
    </location>
</feature>
<feature type="strand" evidence="4">
    <location>
        <begin position="924"/>
        <end position="932"/>
    </location>
</feature>
<feature type="helix" evidence="4">
    <location>
        <begin position="940"/>
        <end position="949"/>
    </location>
</feature>
<feature type="strand" evidence="4">
    <location>
        <begin position="953"/>
        <end position="957"/>
    </location>
</feature>
<feature type="helix" evidence="5">
    <location>
        <begin position="959"/>
        <end position="961"/>
    </location>
</feature>
<feature type="strand" evidence="4">
    <location>
        <begin position="965"/>
        <end position="969"/>
    </location>
</feature>
<feature type="helix" evidence="4">
    <location>
        <begin position="970"/>
        <end position="973"/>
    </location>
</feature>
<feature type="turn" evidence="4">
    <location>
        <begin position="977"/>
        <end position="979"/>
    </location>
</feature>
<feature type="strand" evidence="4">
    <location>
        <begin position="980"/>
        <end position="982"/>
    </location>
</feature>
<feature type="helix" evidence="4">
    <location>
        <begin position="989"/>
        <end position="998"/>
    </location>
</feature>
<feature type="helix" evidence="4">
    <location>
        <begin position="999"/>
        <end position="1001"/>
    </location>
</feature>
<feature type="strand" evidence="4">
    <location>
        <begin position="1015"/>
        <end position="1018"/>
    </location>
</feature>
<feature type="helix" evidence="4">
    <location>
        <begin position="1023"/>
        <end position="1030"/>
    </location>
</feature>
<feature type="strand" evidence="4">
    <location>
        <begin position="1036"/>
        <end position="1038"/>
    </location>
</feature>
<feature type="strand" evidence="4">
    <location>
        <begin position="1043"/>
        <end position="1052"/>
    </location>
</feature>
<feature type="strand" evidence="4">
    <location>
        <begin position="1054"/>
        <end position="1064"/>
    </location>
</feature>
<feature type="strand" evidence="4">
    <location>
        <begin position="1070"/>
        <end position="1074"/>
    </location>
</feature>
<feature type="strand" evidence="4">
    <location>
        <begin position="1086"/>
        <end position="1088"/>
    </location>
</feature>
<feature type="strand" evidence="4">
    <location>
        <begin position="1090"/>
        <end position="1098"/>
    </location>
</feature>
<feature type="helix" evidence="4">
    <location>
        <begin position="1101"/>
        <end position="1108"/>
    </location>
</feature>
<feature type="helix" evidence="4">
    <location>
        <begin position="1110"/>
        <end position="1126"/>
    </location>
</feature>
<feature type="helix" evidence="4">
    <location>
        <begin position="1134"/>
        <end position="1144"/>
    </location>
</feature>
<feature type="strand" evidence="4">
    <location>
        <begin position="1147"/>
        <end position="1152"/>
    </location>
</feature>
<feature type="turn" evidence="4">
    <location>
        <begin position="1153"/>
        <end position="1157"/>
    </location>
</feature>
<feature type="strand" evidence="4">
    <location>
        <begin position="1160"/>
        <end position="1165"/>
    </location>
</feature>
<feature type="helix" evidence="4">
    <location>
        <begin position="1166"/>
        <end position="1178"/>
    </location>
</feature>
<feature type="strand" evidence="4">
    <location>
        <begin position="1185"/>
        <end position="1189"/>
    </location>
</feature>
<feature type="helix" evidence="4">
    <location>
        <begin position="1193"/>
        <end position="1198"/>
    </location>
</feature>
<feature type="helix" evidence="4">
    <location>
        <begin position="1203"/>
        <end position="1208"/>
    </location>
</feature>
<feature type="helix" evidence="4">
    <location>
        <begin position="1214"/>
        <end position="1222"/>
    </location>
</feature>
<feature type="strand" evidence="4">
    <location>
        <begin position="1226"/>
        <end position="1228"/>
    </location>
</feature>
<feature type="helix" evidence="4">
    <location>
        <begin position="1232"/>
        <end position="1237"/>
    </location>
</feature>
<feature type="helix" evidence="4">
    <location>
        <begin position="1244"/>
        <end position="1246"/>
    </location>
</feature>
<feature type="helix" evidence="4">
    <location>
        <begin position="1248"/>
        <end position="1251"/>
    </location>
</feature>
<feature type="strand" evidence="4">
    <location>
        <begin position="1252"/>
        <end position="1257"/>
    </location>
</feature>
<feature type="helix" evidence="4">
    <location>
        <begin position="1259"/>
        <end position="1264"/>
    </location>
</feature>
<accession>Q8CJT1</accession>
<dbReference type="EC" id="2.7.7.6" evidence="1"/>
<dbReference type="EMBL" id="AL939121">
    <property type="protein sequence ID" value="CAD55212.1"/>
    <property type="molecule type" value="Genomic_DNA"/>
</dbReference>
<dbReference type="RefSeq" id="NP_733644.1">
    <property type="nucleotide sequence ID" value="NC_003888.3"/>
</dbReference>
<dbReference type="RefSeq" id="WP_003974308.1">
    <property type="nucleotide sequence ID" value="NZ_VNID01000028.1"/>
</dbReference>
<dbReference type="PDB" id="7VPD">
    <property type="method" value="EM"/>
    <property type="resolution" value="3.77 A"/>
    <property type="chains" value="D=1-1299"/>
</dbReference>
<dbReference type="PDB" id="7VPZ">
    <property type="method" value="EM"/>
    <property type="resolution" value="4.14 A"/>
    <property type="chains" value="D=1-1299"/>
</dbReference>
<dbReference type="PDB" id="7X74">
    <property type="method" value="EM"/>
    <property type="resolution" value="3.70 A"/>
    <property type="chains" value="D=1-1299"/>
</dbReference>
<dbReference type="PDB" id="7X75">
    <property type="method" value="EM"/>
    <property type="resolution" value="3.45 A"/>
    <property type="chains" value="D=1-1299"/>
</dbReference>
<dbReference type="PDB" id="7X76">
    <property type="method" value="EM"/>
    <property type="resolution" value="3.67 A"/>
    <property type="chains" value="D=1-1299"/>
</dbReference>
<dbReference type="PDB" id="8HVR">
    <property type="method" value="EM"/>
    <property type="resolution" value="3.35 A"/>
    <property type="chains" value="D=1-1299"/>
</dbReference>
<dbReference type="PDB" id="8JKE">
    <property type="method" value="EM"/>
    <property type="resolution" value="3.67 A"/>
    <property type="chains" value="D=1-1299"/>
</dbReference>
<dbReference type="PDB" id="8K60">
    <property type="method" value="EM"/>
    <property type="resolution" value="3.40 A"/>
    <property type="chains" value="D=1-1299"/>
</dbReference>
<dbReference type="PDBsum" id="7VPD"/>
<dbReference type="PDBsum" id="7VPZ"/>
<dbReference type="PDBsum" id="7X74"/>
<dbReference type="PDBsum" id="7X75"/>
<dbReference type="PDBsum" id="7X76"/>
<dbReference type="PDBsum" id="8HVR"/>
<dbReference type="PDBsum" id="8JKE"/>
<dbReference type="PDBsum" id="8K60"/>
<dbReference type="EMDB" id="EMD-32063"/>
<dbReference type="EMDB" id="EMD-32077"/>
<dbReference type="EMDB" id="EMD-33031"/>
<dbReference type="EMDB" id="EMD-33032"/>
<dbReference type="EMDB" id="EMD-33033"/>
<dbReference type="EMDB" id="EMD-35047"/>
<dbReference type="EMDB" id="EMD-36370"/>
<dbReference type="EMDB" id="EMD-36914"/>
<dbReference type="SMR" id="Q8CJT1"/>
<dbReference type="FunCoup" id="Q8CJT1">
    <property type="interactions" value="395"/>
</dbReference>
<dbReference type="IntAct" id="Q8CJT1">
    <property type="interactions" value="1"/>
</dbReference>
<dbReference type="MINT" id="Q8CJT1"/>
<dbReference type="STRING" id="100226.gene:17762304"/>
<dbReference type="PaxDb" id="100226-SCO4655"/>
<dbReference type="KEGG" id="sco:SCO4655"/>
<dbReference type="PATRIC" id="fig|100226.15.peg.4726"/>
<dbReference type="eggNOG" id="COG0086">
    <property type="taxonomic scope" value="Bacteria"/>
</dbReference>
<dbReference type="HOGENOM" id="CLU_000524_3_0_11"/>
<dbReference type="InParanoid" id="Q8CJT1"/>
<dbReference type="OrthoDB" id="9815296at2"/>
<dbReference type="PhylomeDB" id="Q8CJT1"/>
<dbReference type="Proteomes" id="UP000001973">
    <property type="component" value="Chromosome"/>
</dbReference>
<dbReference type="GO" id="GO:0000428">
    <property type="term" value="C:DNA-directed RNA polymerase complex"/>
    <property type="evidence" value="ECO:0007669"/>
    <property type="project" value="UniProtKB-KW"/>
</dbReference>
<dbReference type="GO" id="GO:0003677">
    <property type="term" value="F:DNA binding"/>
    <property type="evidence" value="ECO:0007669"/>
    <property type="project" value="UniProtKB-UniRule"/>
</dbReference>
<dbReference type="GO" id="GO:0003899">
    <property type="term" value="F:DNA-directed RNA polymerase activity"/>
    <property type="evidence" value="ECO:0007669"/>
    <property type="project" value="UniProtKB-UniRule"/>
</dbReference>
<dbReference type="GO" id="GO:0000287">
    <property type="term" value="F:magnesium ion binding"/>
    <property type="evidence" value="ECO:0007669"/>
    <property type="project" value="UniProtKB-UniRule"/>
</dbReference>
<dbReference type="GO" id="GO:0008270">
    <property type="term" value="F:zinc ion binding"/>
    <property type="evidence" value="ECO:0007669"/>
    <property type="project" value="UniProtKB-UniRule"/>
</dbReference>
<dbReference type="GO" id="GO:0006351">
    <property type="term" value="P:DNA-templated transcription"/>
    <property type="evidence" value="ECO:0007669"/>
    <property type="project" value="UniProtKB-UniRule"/>
</dbReference>
<dbReference type="CDD" id="cd02655">
    <property type="entry name" value="RNAP_beta'_C"/>
    <property type="match status" value="1"/>
</dbReference>
<dbReference type="CDD" id="cd01609">
    <property type="entry name" value="RNAP_beta'_N"/>
    <property type="match status" value="1"/>
</dbReference>
<dbReference type="FunFam" id="1.10.150.390:FF:000002">
    <property type="entry name" value="DNA-directed RNA polymerase subunit beta"/>
    <property type="match status" value="1"/>
</dbReference>
<dbReference type="FunFam" id="1.10.40.90:FF:000001">
    <property type="entry name" value="DNA-directed RNA polymerase subunit beta"/>
    <property type="match status" value="1"/>
</dbReference>
<dbReference type="FunFam" id="4.10.860.120:FF:000001">
    <property type="entry name" value="DNA-directed RNA polymerase subunit beta"/>
    <property type="match status" value="1"/>
</dbReference>
<dbReference type="Gene3D" id="1.10.132.30">
    <property type="match status" value="1"/>
</dbReference>
<dbReference type="Gene3D" id="1.10.150.390">
    <property type="match status" value="1"/>
</dbReference>
<dbReference type="Gene3D" id="1.10.1790.20">
    <property type="match status" value="1"/>
</dbReference>
<dbReference type="Gene3D" id="1.10.40.90">
    <property type="match status" value="1"/>
</dbReference>
<dbReference type="Gene3D" id="2.40.40.20">
    <property type="match status" value="1"/>
</dbReference>
<dbReference type="Gene3D" id="2.40.50.100">
    <property type="match status" value="1"/>
</dbReference>
<dbReference type="Gene3D" id="4.10.860.120">
    <property type="entry name" value="RNA polymerase II, clamp domain"/>
    <property type="match status" value="1"/>
</dbReference>
<dbReference type="Gene3D" id="1.10.274.100">
    <property type="entry name" value="RNA polymerase Rpb1, domain 3"/>
    <property type="match status" value="1"/>
</dbReference>
<dbReference type="HAMAP" id="MF_01322">
    <property type="entry name" value="RNApol_bact_RpoC"/>
    <property type="match status" value="1"/>
</dbReference>
<dbReference type="InterPro" id="IPR045867">
    <property type="entry name" value="DNA-dir_RpoC_beta_prime"/>
</dbReference>
<dbReference type="InterPro" id="IPR012754">
    <property type="entry name" value="DNA-dir_RpoC_beta_prime_bact"/>
</dbReference>
<dbReference type="InterPro" id="IPR000722">
    <property type="entry name" value="RNA_pol_asu"/>
</dbReference>
<dbReference type="InterPro" id="IPR006592">
    <property type="entry name" value="RNA_pol_N"/>
</dbReference>
<dbReference type="InterPro" id="IPR007080">
    <property type="entry name" value="RNA_pol_Rpb1_1"/>
</dbReference>
<dbReference type="InterPro" id="IPR007066">
    <property type="entry name" value="RNA_pol_Rpb1_3"/>
</dbReference>
<dbReference type="InterPro" id="IPR042102">
    <property type="entry name" value="RNA_pol_Rpb1_3_sf"/>
</dbReference>
<dbReference type="InterPro" id="IPR007083">
    <property type="entry name" value="RNA_pol_Rpb1_4"/>
</dbReference>
<dbReference type="InterPro" id="IPR007081">
    <property type="entry name" value="RNA_pol_Rpb1_5"/>
</dbReference>
<dbReference type="InterPro" id="IPR044893">
    <property type="entry name" value="RNA_pol_Rpb1_clamp_domain"/>
</dbReference>
<dbReference type="InterPro" id="IPR038120">
    <property type="entry name" value="Rpb1_funnel_sf"/>
</dbReference>
<dbReference type="NCBIfam" id="NF011498">
    <property type="entry name" value="PRK14906.1"/>
    <property type="match status" value="1"/>
</dbReference>
<dbReference type="NCBIfam" id="TIGR02386">
    <property type="entry name" value="rpoC_TIGR"/>
    <property type="match status" value="1"/>
</dbReference>
<dbReference type="PANTHER" id="PTHR19376">
    <property type="entry name" value="DNA-DIRECTED RNA POLYMERASE"/>
    <property type="match status" value="1"/>
</dbReference>
<dbReference type="PANTHER" id="PTHR19376:SF54">
    <property type="entry name" value="DNA-DIRECTED RNA POLYMERASE SUBUNIT BETA"/>
    <property type="match status" value="1"/>
</dbReference>
<dbReference type="Pfam" id="PF04997">
    <property type="entry name" value="RNA_pol_Rpb1_1"/>
    <property type="match status" value="1"/>
</dbReference>
<dbReference type="Pfam" id="PF00623">
    <property type="entry name" value="RNA_pol_Rpb1_2"/>
    <property type="match status" value="2"/>
</dbReference>
<dbReference type="Pfam" id="PF04983">
    <property type="entry name" value="RNA_pol_Rpb1_3"/>
    <property type="match status" value="1"/>
</dbReference>
<dbReference type="Pfam" id="PF05000">
    <property type="entry name" value="RNA_pol_Rpb1_4"/>
    <property type="match status" value="1"/>
</dbReference>
<dbReference type="Pfam" id="PF04998">
    <property type="entry name" value="RNA_pol_Rpb1_5"/>
    <property type="match status" value="1"/>
</dbReference>
<dbReference type="SMART" id="SM00663">
    <property type="entry name" value="RPOLA_N"/>
    <property type="match status" value="1"/>
</dbReference>
<dbReference type="SUPFAM" id="SSF64484">
    <property type="entry name" value="beta and beta-prime subunits of DNA dependent RNA-polymerase"/>
    <property type="match status" value="1"/>
</dbReference>
<evidence type="ECO:0000255" key="1">
    <source>
        <dbReference type="HAMAP-Rule" id="MF_01322"/>
    </source>
</evidence>
<evidence type="ECO:0000256" key="2">
    <source>
        <dbReference type="SAM" id="MobiDB-lite"/>
    </source>
</evidence>
<evidence type="ECO:0007829" key="3">
    <source>
        <dbReference type="PDB" id="7X75"/>
    </source>
</evidence>
<evidence type="ECO:0007829" key="4">
    <source>
        <dbReference type="PDB" id="8HVR"/>
    </source>
</evidence>
<evidence type="ECO:0007829" key="5">
    <source>
        <dbReference type="PDB" id="8K60"/>
    </source>
</evidence>
<gene>
    <name evidence="1" type="primary">rpoC</name>
    <name type="ordered locus">SCO4655</name>
    <name type="ORF">SCD40A.01</name>
    <name type="ORF">SCD82.27</name>
</gene>
<comment type="function">
    <text evidence="1">DNA-dependent RNA polymerase catalyzes the transcription of DNA into RNA using the four ribonucleoside triphosphates as substrates.</text>
</comment>
<comment type="catalytic activity">
    <reaction evidence="1">
        <text>RNA(n) + a ribonucleoside 5'-triphosphate = RNA(n+1) + diphosphate</text>
        <dbReference type="Rhea" id="RHEA:21248"/>
        <dbReference type="Rhea" id="RHEA-COMP:14527"/>
        <dbReference type="Rhea" id="RHEA-COMP:17342"/>
        <dbReference type="ChEBI" id="CHEBI:33019"/>
        <dbReference type="ChEBI" id="CHEBI:61557"/>
        <dbReference type="ChEBI" id="CHEBI:140395"/>
        <dbReference type="EC" id="2.7.7.6"/>
    </reaction>
</comment>
<comment type="cofactor">
    <cofactor evidence="1">
        <name>Mg(2+)</name>
        <dbReference type="ChEBI" id="CHEBI:18420"/>
    </cofactor>
    <text evidence="1">Binds 1 Mg(2+) ion per subunit.</text>
</comment>
<comment type="cofactor">
    <cofactor evidence="1">
        <name>Zn(2+)</name>
        <dbReference type="ChEBI" id="CHEBI:29105"/>
    </cofactor>
    <text evidence="1">Binds 2 Zn(2+) ions per subunit.</text>
</comment>
<comment type="subunit">
    <text evidence="1">The RNAP catalytic core consists of 2 alpha, 1 beta, 1 beta' and 1 omega subunit. When a sigma factor is associated with the core the holoenzyme is formed, which can initiate transcription.</text>
</comment>
<comment type="similarity">
    <text evidence="1">Belongs to the RNA polymerase beta' chain family.</text>
</comment>
<sequence>MLDVNFFDELRIGLATADDIRQWSHGEVKKPETINYRTLKPEKDGLFCEKIFGPTRDWECYCGKYKRVRFKGIICERCGVEVTRAKVRRERMGHIELAAPVTHIWYFKGVPSRLGYLLDLAPKDLEKVIYFAAYMITFVDEERRTRDLPSLEAHVSVERQQIEQRRDSDLEARAKKLETDLAELEAEGAKADVRRKVREGAEREMKQLRDRAQREIDRLDEVWNRFKNLKVQDLEGDELLYRELRDRFGTYFDGSMGAAALQKRLESFDLDEEAERLREIIRTGKGQKKTRALKRLKVVSAFLQTSNSPKGMVLDCVPVIPPDLRPMVQLDGGRFATSDLNDLYRRVINRNNRLKRLLDLGAPEIIVNNEKRMLQEAVDALFDNGRRGRPVTGPGNRPLKSLSDMLKGKQGRFRQNLLGKRVDYSARSVIVVGPQLKLHQCGLPKAMALELFKPFVMKRLVDLNHAQNIKSAKRMVERGRTVVYDVLEEVIAEHPVLLNRAPTLHRLGIQAFEPQLVEGKAIQIHPLVCTAFNADFDGDQMAVHLPLSAEAQAEARILMLSSNNILKPADGRPVTMPTQDMVLGLFFLTTDSEGRSPKGEGRAFGSSAEAIMAFDAGDLTLQAKIDIRFPVGTIPPRGFEPPAREEGEPEWQQGDTFTLKTTLGRALFNELLPEDYPFVDYEVGKKQLSEIVNDLAERYPKVIVAATLDNLKAAGFFWATRSGVTVAISDIVVPDAKKEIVKGYEGQDEKVQKQYERGLITKEERTQELIAIWTKATNEVAEAMNDNFPKTNPVSMMVNSGARGNMMQMRQIAGMRGLVSNAKNETIPRPIKASFREGLSVLEYFISTHGARKGLADTALRTADSGYLTRRLVDVSQDVIIREEDCGTERGLKLPIATRDADGTLRKAEDVETSVYARMLAEDVVIDGKVIAPANVDLGDVLIDALVAHGVEEVKTRSILTCESQVGTCAMCYGRSLATGKLVDIGEAVGIIAAQSIGEPGTQLTMRTFHTGGVAGDDITQGLPRVVELFEARTPKGVAPISEASGRVRIEETEKTKKIVVTPDDGSDETAFPISKRARLLVGEGDHVEVGQKLTVGATNPHDVLRILGQRAVQVHLVGEVQKVYNSQGVSIHDKHIEIIIRQMLRRVTIIESGDAELLPGELVERTKFETENRRVVQEGGHPASGRPQLMGITKASLATESWLSAASFQETTRVLTDAAINAKSDSLIGLKENVIIGKLIPAGTGLSRYRNIRVEPTEEAKAAMYSAVGYDDIDYSPFGTGSGQAVPLEDYDYGPYNQ</sequence>
<keyword id="KW-0002">3D-structure</keyword>
<keyword id="KW-0240">DNA-directed RNA polymerase</keyword>
<keyword id="KW-0460">Magnesium</keyword>
<keyword id="KW-0479">Metal-binding</keyword>
<keyword id="KW-0548">Nucleotidyltransferase</keyword>
<keyword id="KW-1185">Reference proteome</keyword>
<keyword id="KW-0804">Transcription</keyword>
<keyword id="KW-0808">Transferase</keyword>
<keyword id="KW-0862">Zinc</keyword>
<organism>
    <name type="scientific">Streptomyces coelicolor (strain ATCC BAA-471 / A3(2) / M145)</name>
    <dbReference type="NCBI Taxonomy" id="100226"/>
    <lineage>
        <taxon>Bacteria</taxon>
        <taxon>Bacillati</taxon>
        <taxon>Actinomycetota</taxon>
        <taxon>Actinomycetes</taxon>
        <taxon>Kitasatosporales</taxon>
        <taxon>Streptomycetaceae</taxon>
        <taxon>Streptomyces</taxon>
        <taxon>Streptomyces albidoflavus group</taxon>
    </lineage>
</organism>
<proteinExistence type="evidence at protein level"/>
<name>RPOC_STRCO</name>
<protein>
    <recommendedName>
        <fullName evidence="1">DNA-directed RNA polymerase subunit beta'</fullName>
        <shortName evidence="1">RNAP subunit beta'</shortName>
        <ecNumber evidence="1">2.7.7.6</ecNumber>
    </recommendedName>
    <alternativeName>
        <fullName evidence="1">RNA polymerase subunit beta'</fullName>
    </alternativeName>
    <alternativeName>
        <fullName evidence="1">Transcriptase subunit beta'</fullName>
    </alternativeName>
</protein>